<protein>
    <recommendedName>
        <fullName evidence="1">Iron-sulfur cluster assembly protein CyaY</fullName>
    </recommendedName>
</protein>
<gene>
    <name evidence="1" type="primary">cyaY</name>
    <name type="ordered locus">YpsIP31758_0203</name>
</gene>
<accession>A7FD72</accession>
<dbReference type="EMBL" id="CP000720">
    <property type="protein sequence ID" value="ABS46950.1"/>
    <property type="molecule type" value="Genomic_DNA"/>
</dbReference>
<dbReference type="RefSeq" id="WP_011191510.1">
    <property type="nucleotide sequence ID" value="NC_009708.1"/>
</dbReference>
<dbReference type="SMR" id="A7FD72"/>
<dbReference type="GeneID" id="49787831"/>
<dbReference type="KEGG" id="ypi:YpsIP31758_0203"/>
<dbReference type="HOGENOM" id="CLU_080880_3_0_6"/>
<dbReference type="Proteomes" id="UP000002412">
    <property type="component" value="Chromosome"/>
</dbReference>
<dbReference type="GO" id="GO:0005829">
    <property type="term" value="C:cytosol"/>
    <property type="evidence" value="ECO:0007669"/>
    <property type="project" value="TreeGrafter"/>
</dbReference>
<dbReference type="GO" id="GO:0008199">
    <property type="term" value="F:ferric iron binding"/>
    <property type="evidence" value="ECO:0007669"/>
    <property type="project" value="InterPro"/>
</dbReference>
<dbReference type="GO" id="GO:0008198">
    <property type="term" value="F:ferrous iron binding"/>
    <property type="evidence" value="ECO:0007669"/>
    <property type="project" value="TreeGrafter"/>
</dbReference>
<dbReference type="GO" id="GO:0016226">
    <property type="term" value="P:iron-sulfur cluster assembly"/>
    <property type="evidence" value="ECO:0007669"/>
    <property type="project" value="UniProtKB-UniRule"/>
</dbReference>
<dbReference type="CDD" id="cd00503">
    <property type="entry name" value="Frataxin"/>
    <property type="match status" value="1"/>
</dbReference>
<dbReference type="FunFam" id="3.30.920.10:FF:000001">
    <property type="entry name" value="Iron-sulfur cluster assembly protein CyaY"/>
    <property type="match status" value="1"/>
</dbReference>
<dbReference type="Gene3D" id="3.30.920.10">
    <property type="entry name" value="Frataxin/CyaY"/>
    <property type="match status" value="1"/>
</dbReference>
<dbReference type="HAMAP" id="MF_00142">
    <property type="entry name" value="CyaY"/>
    <property type="match status" value="1"/>
</dbReference>
<dbReference type="InterPro" id="IPR047584">
    <property type="entry name" value="CyaY"/>
</dbReference>
<dbReference type="InterPro" id="IPR002908">
    <property type="entry name" value="Frataxin/CyaY"/>
</dbReference>
<dbReference type="InterPro" id="IPR036524">
    <property type="entry name" value="Frataxin/CyaY_sf"/>
</dbReference>
<dbReference type="InterPro" id="IPR020895">
    <property type="entry name" value="Frataxin_CS"/>
</dbReference>
<dbReference type="NCBIfam" id="TIGR03421">
    <property type="entry name" value="FeS_CyaY"/>
    <property type="match status" value="1"/>
</dbReference>
<dbReference type="PANTHER" id="PTHR16821">
    <property type="entry name" value="FRATAXIN"/>
    <property type="match status" value="1"/>
</dbReference>
<dbReference type="PANTHER" id="PTHR16821:SF2">
    <property type="entry name" value="FRATAXIN, MITOCHONDRIAL"/>
    <property type="match status" value="1"/>
</dbReference>
<dbReference type="Pfam" id="PF01491">
    <property type="entry name" value="Frataxin_Cyay"/>
    <property type="match status" value="1"/>
</dbReference>
<dbReference type="SMART" id="SM01219">
    <property type="entry name" value="Frataxin_Cyay"/>
    <property type="match status" value="1"/>
</dbReference>
<dbReference type="SUPFAM" id="SSF55387">
    <property type="entry name" value="Frataxin/Nqo15-like"/>
    <property type="match status" value="1"/>
</dbReference>
<dbReference type="PROSITE" id="PS01344">
    <property type="entry name" value="FRATAXIN_1"/>
    <property type="match status" value="1"/>
</dbReference>
<dbReference type="PROSITE" id="PS50810">
    <property type="entry name" value="FRATAXIN_2"/>
    <property type="match status" value="1"/>
</dbReference>
<reference key="1">
    <citation type="journal article" date="2007" name="PLoS Genet.">
        <title>The complete genome sequence of Yersinia pseudotuberculosis IP31758, the causative agent of Far East scarlet-like fever.</title>
        <authorList>
            <person name="Eppinger M."/>
            <person name="Rosovitz M.J."/>
            <person name="Fricke W.F."/>
            <person name="Rasko D.A."/>
            <person name="Kokorina G."/>
            <person name="Fayolle C."/>
            <person name="Lindler L.E."/>
            <person name="Carniel E."/>
            <person name="Ravel J."/>
        </authorList>
    </citation>
    <scope>NUCLEOTIDE SEQUENCE [LARGE SCALE GENOMIC DNA]</scope>
    <source>
        <strain>IP 31758</strain>
    </source>
</reference>
<proteinExistence type="inferred from homology"/>
<feature type="chain" id="PRO_1000057934" description="Iron-sulfur cluster assembly protein CyaY">
    <location>
        <begin position="1"/>
        <end position="107"/>
    </location>
</feature>
<comment type="function">
    <text evidence="1">Involved in iron-sulfur (Fe-S) cluster assembly. May act as a regulator of Fe-S biogenesis.</text>
</comment>
<comment type="similarity">
    <text evidence="1">Belongs to the frataxin family.</text>
</comment>
<name>CYAY_YERP3</name>
<sequence>MNDSEFHQLADQLMLYIEETLDGFTGDSDIDYETNGGVMTLTFENGSKIVINRQEPLHQVWLATKAGGYHFNYRDGHWYCSRSGEEFFAKLSEAATTQAGEEVSFSE</sequence>
<keyword id="KW-0408">Iron</keyword>
<keyword id="KW-0479">Metal-binding</keyword>
<organism>
    <name type="scientific">Yersinia pseudotuberculosis serotype O:1b (strain IP 31758)</name>
    <dbReference type="NCBI Taxonomy" id="349747"/>
    <lineage>
        <taxon>Bacteria</taxon>
        <taxon>Pseudomonadati</taxon>
        <taxon>Pseudomonadota</taxon>
        <taxon>Gammaproteobacteria</taxon>
        <taxon>Enterobacterales</taxon>
        <taxon>Yersiniaceae</taxon>
        <taxon>Yersinia</taxon>
    </lineage>
</organism>
<evidence type="ECO:0000255" key="1">
    <source>
        <dbReference type="HAMAP-Rule" id="MF_00142"/>
    </source>
</evidence>